<name>RR19_PHATC</name>
<keyword id="KW-0150">Chloroplast</keyword>
<keyword id="KW-0934">Plastid</keyword>
<keyword id="KW-1185">Reference proteome</keyword>
<keyword id="KW-0687">Ribonucleoprotein</keyword>
<keyword id="KW-0689">Ribosomal protein</keyword>
<keyword id="KW-0694">RNA-binding</keyword>
<keyword id="KW-0699">rRNA-binding</keyword>
<gene>
    <name evidence="1" type="primary">rps19</name>
</gene>
<proteinExistence type="inferred from homology"/>
<evidence type="ECO:0000255" key="1">
    <source>
        <dbReference type="HAMAP-Rule" id="MF_00531"/>
    </source>
</evidence>
<evidence type="ECO:0000305" key="2"/>
<dbReference type="EMBL" id="EF067920">
    <property type="protein sequence ID" value="ABK20680.1"/>
    <property type="molecule type" value="Genomic_DNA"/>
</dbReference>
<dbReference type="RefSeq" id="YP_874457.1">
    <property type="nucleotide sequence ID" value="NC_008588.1"/>
</dbReference>
<dbReference type="SMR" id="A0T0I2"/>
<dbReference type="STRING" id="556484.A0T0I2"/>
<dbReference type="GeneID" id="4524659"/>
<dbReference type="InParanoid" id="A0T0I2"/>
<dbReference type="Proteomes" id="UP000000759">
    <property type="component" value="Chloroplast"/>
</dbReference>
<dbReference type="GO" id="GO:0009507">
    <property type="term" value="C:chloroplast"/>
    <property type="evidence" value="ECO:0007669"/>
    <property type="project" value="UniProtKB-SubCell"/>
</dbReference>
<dbReference type="GO" id="GO:0005763">
    <property type="term" value="C:mitochondrial small ribosomal subunit"/>
    <property type="evidence" value="ECO:0007669"/>
    <property type="project" value="TreeGrafter"/>
</dbReference>
<dbReference type="GO" id="GO:0019843">
    <property type="term" value="F:rRNA binding"/>
    <property type="evidence" value="ECO:0007669"/>
    <property type="project" value="UniProtKB-UniRule"/>
</dbReference>
<dbReference type="GO" id="GO:0003735">
    <property type="term" value="F:structural constituent of ribosome"/>
    <property type="evidence" value="ECO:0007669"/>
    <property type="project" value="InterPro"/>
</dbReference>
<dbReference type="GO" id="GO:0000028">
    <property type="term" value="P:ribosomal small subunit assembly"/>
    <property type="evidence" value="ECO:0007669"/>
    <property type="project" value="TreeGrafter"/>
</dbReference>
<dbReference type="GO" id="GO:0006412">
    <property type="term" value="P:translation"/>
    <property type="evidence" value="ECO:0007669"/>
    <property type="project" value="UniProtKB-UniRule"/>
</dbReference>
<dbReference type="FunFam" id="3.30.860.10:FF:000001">
    <property type="entry name" value="30S ribosomal protein S19"/>
    <property type="match status" value="1"/>
</dbReference>
<dbReference type="Gene3D" id="3.30.860.10">
    <property type="entry name" value="30s Ribosomal Protein S19, Chain A"/>
    <property type="match status" value="1"/>
</dbReference>
<dbReference type="HAMAP" id="MF_00531">
    <property type="entry name" value="Ribosomal_uS19"/>
    <property type="match status" value="1"/>
</dbReference>
<dbReference type="InterPro" id="IPR002222">
    <property type="entry name" value="Ribosomal_uS19"/>
</dbReference>
<dbReference type="InterPro" id="IPR005732">
    <property type="entry name" value="Ribosomal_uS19_bac-type"/>
</dbReference>
<dbReference type="InterPro" id="IPR020934">
    <property type="entry name" value="Ribosomal_uS19_CS"/>
</dbReference>
<dbReference type="InterPro" id="IPR023575">
    <property type="entry name" value="Ribosomal_uS19_SF"/>
</dbReference>
<dbReference type="NCBIfam" id="TIGR01050">
    <property type="entry name" value="rpsS_bact"/>
    <property type="match status" value="1"/>
</dbReference>
<dbReference type="PANTHER" id="PTHR11880">
    <property type="entry name" value="RIBOSOMAL PROTEIN S19P FAMILY MEMBER"/>
    <property type="match status" value="1"/>
</dbReference>
<dbReference type="PANTHER" id="PTHR11880:SF8">
    <property type="entry name" value="SMALL RIBOSOMAL SUBUNIT PROTEIN US19M"/>
    <property type="match status" value="1"/>
</dbReference>
<dbReference type="Pfam" id="PF00203">
    <property type="entry name" value="Ribosomal_S19"/>
    <property type="match status" value="1"/>
</dbReference>
<dbReference type="PIRSF" id="PIRSF002144">
    <property type="entry name" value="Ribosomal_S19"/>
    <property type="match status" value="1"/>
</dbReference>
<dbReference type="PRINTS" id="PR00975">
    <property type="entry name" value="RIBOSOMALS19"/>
</dbReference>
<dbReference type="SUPFAM" id="SSF54570">
    <property type="entry name" value="Ribosomal protein S19"/>
    <property type="match status" value="1"/>
</dbReference>
<dbReference type="PROSITE" id="PS00323">
    <property type="entry name" value="RIBOSOMAL_S19"/>
    <property type="match status" value="1"/>
</dbReference>
<organism>
    <name type="scientific">Phaeodactylum tricornutum (strain CCAP 1055/1)</name>
    <dbReference type="NCBI Taxonomy" id="556484"/>
    <lineage>
        <taxon>Eukaryota</taxon>
        <taxon>Sar</taxon>
        <taxon>Stramenopiles</taxon>
        <taxon>Ochrophyta</taxon>
        <taxon>Bacillariophyta</taxon>
        <taxon>Bacillariophyceae</taxon>
        <taxon>Bacillariophycidae</taxon>
        <taxon>Naviculales</taxon>
        <taxon>Phaeodactylaceae</taxon>
        <taxon>Phaeodactylum</taxon>
    </lineage>
</organism>
<accession>A0T0I2</accession>
<sequence length="92" mass="10542">MPRSLKKSPFVAYHLLKKINQMNKAGKKDTITTWSRSSTILPSMIGFTIAVYNGKQHVPIFISDQLVGHKLGEFVSTRNFRTHIKADRKTKR</sequence>
<comment type="function">
    <text evidence="1">Protein S19 forms a complex with S13 that binds strongly to the 16S ribosomal RNA.</text>
</comment>
<comment type="subcellular location">
    <subcellularLocation>
        <location>Plastid</location>
        <location>Chloroplast</location>
    </subcellularLocation>
</comment>
<comment type="similarity">
    <text evidence="1">Belongs to the universal ribosomal protein uS19 family.</text>
</comment>
<geneLocation type="chloroplast"/>
<reference key="1">
    <citation type="journal article" date="2007" name="Mol. Genet. Genomics">
        <title>Chloroplast genomes of the diatoms Phaeodactylum tricornutum and Thalassiosira pseudonana: comparison with other plastid genomes of the red lineage.</title>
        <authorList>
            <person name="Oudot-Le Secq M.-P."/>
            <person name="Grimwood J."/>
            <person name="Shapiro H."/>
            <person name="Armbrust E.V."/>
            <person name="Bowler C."/>
            <person name="Green B.R."/>
        </authorList>
    </citation>
    <scope>NUCLEOTIDE SEQUENCE [LARGE SCALE GENOMIC DNA]</scope>
    <source>
        <strain>CCAP 1055/1</strain>
    </source>
</reference>
<protein>
    <recommendedName>
        <fullName evidence="1">Small ribosomal subunit protein uS19c</fullName>
    </recommendedName>
    <alternativeName>
        <fullName evidence="2">30S ribosomal protein S19, chloroplastic</fullName>
    </alternativeName>
</protein>
<feature type="chain" id="PRO_0000276933" description="Small ribosomal subunit protein uS19c">
    <location>
        <begin position="1"/>
        <end position="92"/>
    </location>
</feature>